<organism>
    <name type="scientific">Saccharomyces cerevisiae (strain ATCC 204508 / S288c)</name>
    <name type="common">Baker's yeast</name>
    <dbReference type="NCBI Taxonomy" id="559292"/>
    <lineage>
        <taxon>Eukaryota</taxon>
        <taxon>Fungi</taxon>
        <taxon>Dikarya</taxon>
        <taxon>Ascomycota</taxon>
        <taxon>Saccharomycotina</taxon>
        <taxon>Saccharomycetes</taxon>
        <taxon>Saccharomycetales</taxon>
        <taxon>Saccharomycetaceae</taxon>
        <taxon>Saccharomyces</taxon>
    </lineage>
</organism>
<comment type="subcellular location">
    <subcellularLocation>
        <location evidence="1">Cytoplasm</location>
    </subcellularLocation>
    <subcellularLocation>
        <location evidence="1">Nucleus</location>
    </subcellularLocation>
</comment>
<evidence type="ECO:0000269" key="1">
    <source>
    </source>
</evidence>
<gene>
    <name type="ordered locus">YGR151C</name>
</gene>
<name>YG3N_YEAST</name>
<reference key="1">
    <citation type="journal article" date="1997" name="Nature">
        <title>The nucleotide sequence of Saccharomyces cerevisiae chromosome VII.</title>
        <authorList>
            <person name="Tettelin H."/>
            <person name="Agostoni-Carbone M.L."/>
            <person name="Albermann K."/>
            <person name="Albers M."/>
            <person name="Arroyo J."/>
            <person name="Backes U."/>
            <person name="Barreiros T."/>
            <person name="Bertani I."/>
            <person name="Bjourson A.J."/>
            <person name="Brueckner M."/>
            <person name="Bruschi C.V."/>
            <person name="Carignani G."/>
            <person name="Castagnoli L."/>
            <person name="Cerdan E."/>
            <person name="Clemente M.L."/>
            <person name="Coblenz A."/>
            <person name="Coglievina M."/>
            <person name="Coissac E."/>
            <person name="Defoor E."/>
            <person name="Del Bino S."/>
            <person name="Delius H."/>
            <person name="Delneri D."/>
            <person name="de Wergifosse P."/>
            <person name="Dujon B."/>
            <person name="Durand P."/>
            <person name="Entian K.-D."/>
            <person name="Eraso P."/>
            <person name="Escribano V."/>
            <person name="Fabiani L."/>
            <person name="Fartmann B."/>
            <person name="Feroli F."/>
            <person name="Feuermann M."/>
            <person name="Frontali L."/>
            <person name="Garcia-Gonzalez M."/>
            <person name="Garcia-Saez M.I."/>
            <person name="Goffeau A."/>
            <person name="Guerreiro P."/>
            <person name="Hani J."/>
            <person name="Hansen M."/>
            <person name="Hebling U."/>
            <person name="Hernandez K."/>
            <person name="Heumann K."/>
            <person name="Hilger F."/>
            <person name="Hofmann B."/>
            <person name="Indge K.J."/>
            <person name="James C.M."/>
            <person name="Klima R."/>
            <person name="Koetter P."/>
            <person name="Kramer B."/>
            <person name="Kramer W."/>
            <person name="Lauquin G."/>
            <person name="Leuther H."/>
            <person name="Louis E.J."/>
            <person name="Maillier E."/>
            <person name="Marconi A."/>
            <person name="Martegani E."/>
            <person name="Mazon M.J."/>
            <person name="Mazzoni C."/>
            <person name="McReynolds A.D.K."/>
            <person name="Melchioretto P."/>
            <person name="Mewes H.-W."/>
            <person name="Minenkova O."/>
            <person name="Mueller-Auer S."/>
            <person name="Nawrocki A."/>
            <person name="Netter P."/>
            <person name="Neu R."/>
            <person name="Nombela C."/>
            <person name="Oliver S.G."/>
            <person name="Panzeri L."/>
            <person name="Paoluzi S."/>
            <person name="Plevani P."/>
            <person name="Portetelle D."/>
            <person name="Portillo F."/>
            <person name="Potier S."/>
            <person name="Purnelle B."/>
            <person name="Rieger M."/>
            <person name="Riles L."/>
            <person name="Rinaldi T."/>
            <person name="Robben J."/>
            <person name="Rodrigues-Pousada C."/>
            <person name="Rodriguez-Belmonte E."/>
            <person name="Rodriguez-Torres A.M."/>
            <person name="Rose M."/>
            <person name="Ruzzi M."/>
            <person name="Saliola M."/>
            <person name="Sanchez-Perez M."/>
            <person name="Schaefer B."/>
            <person name="Schaefer M."/>
            <person name="Scharfe M."/>
            <person name="Schmidheini T."/>
            <person name="Schreer A."/>
            <person name="Skala J."/>
            <person name="Souciet J.-L."/>
            <person name="Steensma H.Y."/>
            <person name="Talla E."/>
            <person name="Thierry A."/>
            <person name="Vandenbol M."/>
            <person name="van der Aart Q.J.M."/>
            <person name="Van Dyck L."/>
            <person name="Vanoni M."/>
            <person name="Verhasselt P."/>
            <person name="Voet M."/>
            <person name="Volckaert G."/>
            <person name="Wambutt R."/>
            <person name="Watson M.D."/>
            <person name="Weber N."/>
            <person name="Wedler E."/>
            <person name="Wedler H."/>
            <person name="Wipfli P."/>
            <person name="Wolf K."/>
            <person name="Wright L.F."/>
            <person name="Zaccaria P."/>
            <person name="Zimmermann M."/>
            <person name="Zollner A."/>
            <person name="Kleine K."/>
        </authorList>
    </citation>
    <scope>NUCLEOTIDE SEQUENCE [LARGE SCALE GENOMIC DNA]</scope>
    <source>
        <strain>ATCC 204508 / S288c</strain>
    </source>
</reference>
<reference key="2">
    <citation type="journal article" date="2014" name="G3 (Bethesda)">
        <title>The reference genome sequence of Saccharomyces cerevisiae: Then and now.</title>
        <authorList>
            <person name="Engel S.R."/>
            <person name="Dietrich F.S."/>
            <person name="Fisk D.G."/>
            <person name="Binkley G."/>
            <person name="Balakrishnan R."/>
            <person name="Costanzo M.C."/>
            <person name="Dwight S.S."/>
            <person name="Hitz B.C."/>
            <person name="Karra K."/>
            <person name="Nash R.S."/>
            <person name="Weng S."/>
            <person name="Wong E.D."/>
            <person name="Lloyd P."/>
            <person name="Skrzypek M.S."/>
            <person name="Miyasato S.R."/>
            <person name="Simison M."/>
            <person name="Cherry J.M."/>
        </authorList>
    </citation>
    <scope>GENOME REANNOTATION</scope>
    <source>
        <strain>ATCC 204508 / S288c</strain>
    </source>
</reference>
<reference key="3">
    <citation type="journal article" date="2003" name="Nature">
        <title>Global analysis of protein localization in budding yeast.</title>
        <authorList>
            <person name="Huh W.-K."/>
            <person name="Falvo J.V."/>
            <person name="Gerke L.C."/>
            <person name="Carroll A.S."/>
            <person name="Howson R.W."/>
            <person name="Weissman J.S."/>
            <person name="O'Shea E.K."/>
        </authorList>
    </citation>
    <scope>SUBCELLULAR LOCATION [LARGE SCALE ANALYSIS]</scope>
</reference>
<sequence>MKWKVLQLKTQEIKVNNLAKSSLHQPGSLVLRNRIRNNQTISNHQKVYITNLHKDKLKLNNLLRLMKSTNRHMPFRNLVLATGQELALLHNKRKRRKTLPLALFYSHLILL</sequence>
<proteinExistence type="evidence at protein level"/>
<keyword id="KW-0963">Cytoplasm</keyword>
<keyword id="KW-0539">Nucleus</keyword>
<keyword id="KW-1185">Reference proteome</keyword>
<protein>
    <recommendedName>
        <fullName>Uncharacterized protein YGR151C</fullName>
    </recommendedName>
</protein>
<dbReference type="EMBL" id="Z72936">
    <property type="protein sequence ID" value="CAA97165.1"/>
    <property type="molecule type" value="Genomic_DNA"/>
</dbReference>
<dbReference type="EMBL" id="BK006941">
    <property type="status" value="NOT_ANNOTATED_CDS"/>
    <property type="molecule type" value="Genomic_DNA"/>
</dbReference>
<dbReference type="PIR" id="S64460">
    <property type="entry name" value="S64460"/>
</dbReference>
<dbReference type="DIP" id="DIP-4486N"/>
<dbReference type="FunCoup" id="P53287">
    <property type="interactions" value="1"/>
</dbReference>
<dbReference type="IntAct" id="P53287">
    <property type="interactions" value="2"/>
</dbReference>
<dbReference type="STRING" id="4932.YGR151C"/>
<dbReference type="PaxDb" id="4932-YGR151C"/>
<dbReference type="EnsemblFungi" id="YGR151C_mRNA">
    <property type="protein sequence ID" value="YGR151C"/>
    <property type="gene ID" value="YGR151C"/>
</dbReference>
<dbReference type="AGR" id="SGD:S000003383"/>
<dbReference type="SGD" id="S000003383">
    <property type="gene designation" value="YGR151C"/>
</dbReference>
<dbReference type="HOGENOM" id="CLU_2160389_0_0_1"/>
<dbReference type="InParanoid" id="P53287"/>
<dbReference type="PRO" id="PR:P53287"/>
<dbReference type="Proteomes" id="UP000002311">
    <property type="component" value="Chromosome VII"/>
</dbReference>
<dbReference type="RNAct" id="P53287">
    <property type="molecule type" value="protein"/>
</dbReference>
<dbReference type="GO" id="GO:0005737">
    <property type="term" value="C:cytoplasm"/>
    <property type="evidence" value="ECO:0007005"/>
    <property type="project" value="SGD"/>
</dbReference>
<dbReference type="GO" id="GO:0005634">
    <property type="term" value="C:nucleus"/>
    <property type="evidence" value="ECO:0007005"/>
    <property type="project" value="SGD"/>
</dbReference>
<feature type="chain" id="PRO_0000202831" description="Uncharacterized protein YGR151C">
    <location>
        <begin position="1"/>
        <end position="111"/>
    </location>
</feature>
<accession>P53287</accession>